<accession>Q1KN16</accession>
<sequence length="163" mass="18246">IQSTSMDQGILTEDSMNSFIRTLIQAGIWKNKVPKQAARTKDGMQTTVKKTEAGADAMASKDTRLSFQPIVSVDAELLRQQRRFSSPRVLLSENTPLEPPPLYLTEEPTVLNRTSRRKREGKSHRGEYSVCDSESRWVTDKSSAVDIRGHQVTVLGEIRMGPS</sequence>
<feature type="signal peptide" evidence="2">
    <location>
        <begin position="1" status="less than"/>
        <end position="3"/>
    </location>
</feature>
<feature type="propeptide" id="PRO_0000346729" evidence="1">
    <location>
        <begin position="4"/>
        <end position="119"/>
    </location>
</feature>
<feature type="chain" id="PRO_0000346730" description="Neurotrophin-3">
    <location>
        <begin position="120"/>
        <end position="163" status="greater than"/>
    </location>
</feature>
<feature type="glycosylation site" description="N-linked (GlcNAc...) asparagine" evidence="2">
    <location>
        <position position="112"/>
    </location>
</feature>
<feature type="non-terminal residue">
    <location>
        <position position="1"/>
    </location>
</feature>
<feature type="non-terminal residue">
    <location>
        <position position="163"/>
    </location>
</feature>
<comment type="function">
    <text evidence="1">Seems to promote the survival of visceral and proprioceptive sensory neurons.</text>
</comment>
<comment type="subcellular location">
    <subcellularLocation>
        <location evidence="1">Secreted</location>
    </subcellularLocation>
</comment>
<comment type="similarity">
    <text evidence="3">Belongs to the NGF-beta family.</text>
</comment>
<proteinExistence type="inferred from homology"/>
<gene>
    <name type="primary">NTF3</name>
</gene>
<protein>
    <recommendedName>
        <fullName>Neurotrophin-3</fullName>
        <shortName>NT-3</shortName>
    </recommendedName>
</protein>
<evidence type="ECO:0000250" key="1"/>
<evidence type="ECO:0000255" key="2"/>
<evidence type="ECO:0000305" key="3"/>
<keyword id="KW-0165">Cleavage on pair of basic residues</keyword>
<keyword id="KW-0325">Glycoprotein</keyword>
<keyword id="KW-0339">Growth factor</keyword>
<keyword id="KW-0964">Secreted</keyword>
<keyword id="KW-0732">Signal</keyword>
<dbReference type="EMBL" id="DQ465569">
    <property type="protein sequence ID" value="ABE76337.1"/>
    <property type="molecule type" value="Genomic_DNA"/>
</dbReference>
<dbReference type="SMR" id="Q1KN16"/>
<dbReference type="GlyCosmos" id="Q1KN16">
    <property type="glycosylation" value="1 site, No reported glycans"/>
</dbReference>
<dbReference type="GO" id="GO:0030424">
    <property type="term" value="C:axon"/>
    <property type="evidence" value="ECO:0007669"/>
    <property type="project" value="TreeGrafter"/>
</dbReference>
<dbReference type="GO" id="GO:0030425">
    <property type="term" value="C:dendrite"/>
    <property type="evidence" value="ECO:0007669"/>
    <property type="project" value="TreeGrafter"/>
</dbReference>
<dbReference type="GO" id="GO:0005615">
    <property type="term" value="C:extracellular space"/>
    <property type="evidence" value="ECO:0007669"/>
    <property type="project" value="TreeGrafter"/>
</dbReference>
<dbReference type="GO" id="GO:0008021">
    <property type="term" value="C:synaptic vesicle"/>
    <property type="evidence" value="ECO:0007669"/>
    <property type="project" value="TreeGrafter"/>
</dbReference>
<dbReference type="GO" id="GO:0008083">
    <property type="term" value="F:growth factor activity"/>
    <property type="evidence" value="ECO:0007669"/>
    <property type="project" value="UniProtKB-KW"/>
</dbReference>
<dbReference type="GO" id="GO:0005163">
    <property type="term" value="F:nerve growth factor receptor binding"/>
    <property type="evidence" value="ECO:0007669"/>
    <property type="project" value="TreeGrafter"/>
</dbReference>
<dbReference type="GO" id="GO:0007169">
    <property type="term" value="P:cell surface receptor protein tyrosine kinase signaling pathway"/>
    <property type="evidence" value="ECO:0007669"/>
    <property type="project" value="TreeGrafter"/>
</dbReference>
<dbReference type="GO" id="GO:0050804">
    <property type="term" value="P:modulation of chemical synaptic transmission"/>
    <property type="evidence" value="ECO:0007669"/>
    <property type="project" value="TreeGrafter"/>
</dbReference>
<dbReference type="GO" id="GO:0043524">
    <property type="term" value="P:negative regulation of neuron apoptotic process"/>
    <property type="evidence" value="ECO:0007669"/>
    <property type="project" value="TreeGrafter"/>
</dbReference>
<dbReference type="GO" id="GO:0021675">
    <property type="term" value="P:nerve development"/>
    <property type="evidence" value="ECO:0007669"/>
    <property type="project" value="TreeGrafter"/>
</dbReference>
<dbReference type="GO" id="GO:0038180">
    <property type="term" value="P:nerve growth factor signaling pathway"/>
    <property type="evidence" value="ECO:0007669"/>
    <property type="project" value="TreeGrafter"/>
</dbReference>
<dbReference type="GO" id="GO:0048812">
    <property type="term" value="P:neuron projection morphogenesis"/>
    <property type="evidence" value="ECO:0007669"/>
    <property type="project" value="TreeGrafter"/>
</dbReference>
<dbReference type="Gene3D" id="2.10.90.10">
    <property type="entry name" value="Cystine-knot cytokines"/>
    <property type="match status" value="1"/>
</dbReference>
<dbReference type="InterPro" id="IPR029034">
    <property type="entry name" value="Cystine-knot_cytokine"/>
</dbReference>
<dbReference type="InterPro" id="IPR020408">
    <property type="entry name" value="Nerve_growth_factor-like"/>
</dbReference>
<dbReference type="InterPro" id="IPR002072">
    <property type="entry name" value="Nerve_growth_factor-rel"/>
</dbReference>
<dbReference type="InterPro" id="IPR015578">
    <property type="entry name" value="Neurotrophin-3"/>
</dbReference>
<dbReference type="InterPro" id="IPR045815">
    <property type="entry name" value="NTF3_N"/>
</dbReference>
<dbReference type="PANTHER" id="PTHR11589">
    <property type="entry name" value="NERVE GROWTH FACTOR NGF -RELATED"/>
    <property type="match status" value="1"/>
</dbReference>
<dbReference type="PANTHER" id="PTHR11589:SF4">
    <property type="entry name" value="NEUROTROPHIN-3"/>
    <property type="match status" value="1"/>
</dbReference>
<dbReference type="Pfam" id="PF00243">
    <property type="entry name" value="NGF"/>
    <property type="match status" value="1"/>
</dbReference>
<dbReference type="Pfam" id="PF19338">
    <property type="entry name" value="NTF3_N"/>
    <property type="match status" value="1"/>
</dbReference>
<dbReference type="PIRSF" id="PIRSF001789">
    <property type="entry name" value="NGF"/>
    <property type="match status" value="1"/>
</dbReference>
<dbReference type="PRINTS" id="PR01914">
    <property type="entry name" value="NEUROTROPHN3"/>
</dbReference>
<dbReference type="SMART" id="SM00140">
    <property type="entry name" value="NGF"/>
    <property type="match status" value="1"/>
</dbReference>
<dbReference type="SUPFAM" id="SSF57501">
    <property type="entry name" value="Cystine-knot cytokines"/>
    <property type="match status" value="1"/>
</dbReference>
<dbReference type="PROSITE" id="PS50270">
    <property type="entry name" value="NGF_2"/>
    <property type="match status" value="1"/>
</dbReference>
<name>NTF3_ERYCC</name>
<organism>
    <name type="scientific">Eryx colubrinus colubrinus</name>
    <dbReference type="NCBI Taxonomy" id="51865"/>
    <lineage>
        <taxon>Eukaryota</taxon>
        <taxon>Metazoa</taxon>
        <taxon>Chordata</taxon>
        <taxon>Craniata</taxon>
        <taxon>Vertebrata</taxon>
        <taxon>Euteleostomi</taxon>
        <taxon>Lepidosauria</taxon>
        <taxon>Squamata</taxon>
        <taxon>Bifurcata</taxon>
        <taxon>Unidentata</taxon>
        <taxon>Episquamata</taxon>
        <taxon>Toxicofera</taxon>
        <taxon>Serpentes</taxon>
        <taxon>Henophidia</taxon>
        <taxon>Boidae</taxon>
        <taxon>Erycinae</taxon>
        <taxon>Eryx</taxon>
    </lineage>
</organism>
<reference key="1">
    <citation type="journal article" date="2006" name="Mol. Phylogenet. Evol.">
        <title>Dispersal and vicariance: the complex evolutionary history of boid snakes.</title>
        <authorList>
            <person name="Noonan B.P."/>
            <person name="Chippindale P.T."/>
        </authorList>
    </citation>
    <scope>NUCLEOTIDE SEQUENCE [GENOMIC DNA]</scope>
</reference>